<evidence type="ECO:0000255" key="1">
    <source>
        <dbReference type="HAMAP-Rule" id="MF_00139"/>
    </source>
</evidence>
<evidence type="ECO:0000255" key="2">
    <source>
        <dbReference type="PROSITE-ProRule" id="PRU01202"/>
    </source>
</evidence>
<dbReference type="EC" id="2.1.2.3" evidence="1"/>
<dbReference type="EC" id="3.5.4.10" evidence="1"/>
<dbReference type="EMBL" id="AP008229">
    <property type="protein sequence ID" value="BAE67261.1"/>
    <property type="molecule type" value="Genomic_DNA"/>
</dbReference>
<dbReference type="RefSeq" id="WP_011407474.1">
    <property type="nucleotide sequence ID" value="NC_007705.1"/>
</dbReference>
<dbReference type="SMR" id="Q2P866"/>
<dbReference type="KEGG" id="xom:XOO0506"/>
<dbReference type="HOGENOM" id="CLU_016316_5_2_6"/>
<dbReference type="UniPathway" id="UPA00074">
    <property type="reaction ID" value="UER00133"/>
</dbReference>
<dbReference type="UniPathway" id="UPA00074">
    <property type="reaction ID" value="UER00135"/>
</dbReference>
<dbReference type="GO" id="GO:0005829">
    <property type="term" value="C:cytosol"/>
    <property type="evidence" value="ECO:0007669"/>
    <property type="project" value="TreeGrafter"/>
</dbReference>
<dbReference type="GO" id="GO:0003937">
    <property type="term" value="F:IMP cyclohydrolase activity"/>
    <property type="evidence" value="ECO:0007669"/>
    <property type="project" value="UniProtKB-UniRule"/>
</dbReference>
<dbReference type="GO" id="GO:0004643">
    <property type="term" value="F:phosphoribosylaminoimidazolecarboxamide formyltransferase activity"/>
    <property type="evidence" value="ECO:0007669"/>
    <property type="project" value="UniProtKB-UniRule"/>
</dbReference>
<dbReference type="GO" id="GO:0006189">
    <property type="term" value="P:'de novo' IMP biosynthetic process"/>
    <property type="evidence" value="ECO:0007669"/>
    <property type="project" value="UniProtKB-UniRule"/>
</dbReference>
<dbReference type="CDD" id="cd01421">
    <property type="entry name" value="IMPCH"/>
    <property type="match status" value="1"/>
</dbReference>
<dbReference type="FunFam" id="3.40.140.20:FF:000001">
    <property type="entry name" value="Bifunctional purine biosynthesis protein PurH"/>
    <property type="match status" value="1"/>
</dbReference>
<dbReference type="FunFam" id="3.40.140.20:FF:000002">
    <property type="entry name" value="Bifunctional purine biosynthesis protein PurH"/>
    <property type="match status" value="1"/>
</dbReference>
<dbReference type="FunFam" id="3.40.50.1380:FF:000001">
    <property type="entry name" value="Bifunctional purine biosynthesis protein PurH"/>
    <property type="match status" value="1"/>
</dbReference>
<dbReference type="Gene3D" id="3.40.140.20">
    <property type="match status" value="2"/>
</dbReference>
<dbReference type="Gene3D" id="3.40.50.1380">
    <property type="entry name" value="Methylglyoxal synthase-like domain"/>
    <property type="match status" value="1"/>
</dbReference>
<dbReference type="HAMAP" id="MF_00139">
    <property type="entry name" value="PurH"/>
    <property type="match status" value="1"/>
</dbReference>
<dbReference type="InterPro" id="IPR024051">
    <property type="entry name" value="AICAR_Tfase_dup_dom_sf"/>
</dbReference>
<dbReference type="InterPro" id="IPR016193">
    <property type="entry name" value="Cytidine_deaminase-like"/>
</dbReference>
<dbReference type="InterPro" id="IPR011607">
    <property type="entry name" value="MGS-like_dom"/>
</dbReference>
<dbReference type="InterPro" id="IPR036914">
    <property type="entry name" value="MGS-like_dom_sf"/>
</dbReference>
<dbReference type="InterPro" id="IPR002695">
    <property type="entry name" value="PurH-like"/>
</dbReference>
<dbReference type="NCBIfam" id="NF002049">
    <property type="entry name" value="PRK00881.1"/>
    <property type="match status" value="1"/>
</dbReference>
<dbReference type="NCBIfam" id="TIGR00355">
    <property type="entry name" value="purH"/>
    <property type="match status" value="1"/>
</dbReference>
<dbReference type="PANTHER" id="PTHR11692:SF0">
    <property type="entry name" value="BIFUNCTIONAL PURINE BIOSYNTHESIS PROTEIN ATIC"/>
    <property type="match status" value="1"/>
</dbReference>
<dbReference type="PANTHER" id="PTHR11692">
    <property type="entry name" value="BIFUNCTIONAL PURINE BIOSYNTHESIS PROTEIN PURH"/>
    <property type="match status" value="1"/>
</dbReference>
<dbReference type="Pfam" id="PF01808">
    <property type="entry name" value="AICARFT_IMPCHas"/>
    <property type="match status" value="1"/>
</dbReference>
<dbReference type="Pfam" id="PF02142">
    <property type="entry name" value="MGS"/>
    <property type="match status" value="1"/>
</dbReference>
<dbReference type="PIRSF" id="PIRSF000414">
    <property type="entry name" value="AICARFT_IMPCHas"/>
    <property type="match status" value="1"/>
</dbReference>
<dbReference type="SMART" id="SM00798">
    <property type="entry name" value="AICARFT_IMPCHas"/>
    <property type="match status" value="1"/>
</dbReference>
<dbReference type="SMART" id="SM00851">
    <property type="entry name" value="MGS"/>
    <property type="match status" value="1"/>
</dbReference>
<dbReference type="SUPFAM" id="SSF53927">
    <property type="entry name" value="Cytidine deaminase-like"/>
    <property type="match status" value="1"/>
</dbReference>
<dbReference type="SUPFAM" id="SSF52335">
    <property type="entry name" value="Methylglyoxal synthase-like"/>
    <property type="match status" value="1"/>
</dbReference>
<dbReference type="PROSITE" id="PS51855">
    <property type="entry name" value="MGS"/>
    <property type="match status" value="1"/>
</dbReference>
<keyword id="KW-0378">Hydrolase</keyword>
<keyword id="KW-0511">Multifunctional enzyme</keyword>
<keyword id="KW-0658">Purine biosynthesis</keyword>
<keyword id="KW-0808">Transferase</keyword>
<proteinExistence type="inferred from homology"/>
<comment type="catalytic activity">
    <reaction evidence="1">
        <text>(6R)-10-formyltetrahydrofolate + 5-amino-1-(5-phospho-beta-D-ribosyl)imidazole-4-carboxamide = 5-formamido-1-(5-phospho-D-ribosyl)imidazole-4-carboxamide + (6S)-5,6,7,8-tetrahydrofolate</text>
        <dbReference type="Rhea" id="RHEA:22192"/>
        <dbReference type="ChEBI" id="CHEBI:57453"/>
        <dbReference type="ChEBI" id="CHEBI:58467"/>
        <dbReference type="ChEBI" id="CHEBI:58475"/>
        <dbReference type="ChEBI" id="CHEBI:195366"/>
        <dbReference type="EC" id="2.1.2.3"/>
    </reaction>
</comment>
<comment type="catalytic activity">
    <reaction evidence="1">
        <text>IMP + H2O = 5-formamido-1-(5-phospho-D-ribosyl)imidazole-4-carboxamide</text>
        <dbReference type="Rhea" id="RHEA:18445"/>
        <dbReference type="ChEBI" id="CHEBI:15377"/>
        <dbReference type="ChEBI" id="CHEBI:58053"/>
        <dbReference type="ChEBI" id="CHEBI:58467"/>
        <dbReference type="EC" id="3.5.4.10"/>
    </reaction>
</comment>
<comment type="pathway">
    <text evidence="1">Purine metabolism; IMP biosynthesis via de novo pathway; 5-formamido-1-(5-phospho-D-ribosyl)imidazole-4-carboxamide from 5-amino-1-(5-phospho-D-ribosyl)imidazole-4-carboxamide (10-formyl THF route): step 1/1.</text>
</comment>
<comment type="pathway">
    <text evidence="1">Purine metabolism; IMP biosynthesis via de novo pathway; IMP from 5-formamido-1-(5-phospho-D-ribosyl)imidazole-4-carboxamide: step 1/1.</text>
</comment>
<comment type="domain">
    <text evidence="1">The IMP cyclohydrolase activity resides in the N-terminal region.</text>
</comment>
<comment type="similarity">
    <text evidence="1">Belongs to the PurH family.</text>
</comment>
<organism>
    <name type="scientific">Xanthomonas oryzae pv. oryzae (strain MAFF 311018)</name>
    <dbReference type="NCBI Taxonomy" id="342109"/>
    <lineage>
        <taxon>Bacteria</taxon>
        <taxon>Pseudomonadati</taxon>
        <taxon>Pseudomonadota</taxon>
        <taxon>Gammaproteobacteria</taxon>
        <taxon>Lysobacterales</taxon>
        <taxon>Lysobacteraceae</taxon>
        <taxon>Xanthomonas</taxon>
    </lineage>
</organism>
<sequence length="527" mass="55777">MASDFLPVRRALLSVSDKTGLIDLARALVARNVELLSTGGTAKAIREAGLPVKDVAELTGFPEMMDGRVKTLHPLVHGGLLGRAGIDEAVMAEHGIAPIDLLVLNLYPFESVTVKTDCTLADAVENIDIGGPAMLRSAAKNFARVAVATDPAQYADLLAELEANNGQLSAAKRFALSVAAFNRVAQYDAAISNYLSAVADSAETVPTRNPFPAQINSNFVKVMDLRYGENPHQSGAFYRDLYPVPGTLATFQQLQGKELSYNNLADADAAWECVRQFDAPACVIVKHANPCGVAVGAGCGDAYELAYATDPTSAFGSILAFNKTLDAATAKAILDRQFVEVLIAPDYDAGALDYATKKANVRVLKIPHGNGLNNYDTKRIGSGLLMQSADNRGMSLGELSVVTQRAPSEAELGDLLFAWRVAKYVKSNAIVYAKDSRTIGVGAGQMSRVVSAKIAALKAEEAKLTVVGSVMASDAFFPFRDGIDAAASAGIQAVIQPGGSMRDGEVIAAADEHGIAMVFTGVRHFRH</sequence>
<accession>Q2P866</accession>
<reference key="1">
    <citation type="journal article" date="2005" name="Jpn. Agric. Res. Q.">
        <title>Genome sequence of Xanthomonas oryzae pv. oryzae suggests contribution of large numbers of effector genes and insertion sequences to its race diversity.</title>
        <authorList>
            <person name="Ochiai H."/>
            <person name="Inoue Y."/>
            <person name="Takeya M."/>
            <person name="Sasaki A."/>
            <person name="Kaku H."/>
        </authorList>
    </citation>
    <scope>NUCLEOTIDE SEQUENCE [LARGE SCALE GENOMIC DNA]</scope>
    <source>
        <strain>MAFF 311018</strain>
    </source>
</reference>
<gene>
    <name evidence="1" type="primary">purH</name>
    <name type="ordered locus">XOO0506</name>
</gene>
<feature type="chain" id="PRO_1000018988" description="Bifunctional purine biosynthesis protein PurH">
    <location>
        <begin position="1"/>
        <end position="527"/>
    </location>
</feature>
<feature type="domain" description="MGS-like" evidence="2">
    <location>
        <begin position="1"/>
        <end position="149"/>
    </location>
</feature>
<name>PUR9_XANOM</name>
<protein>
    <recommendedName>
        <fullName evidence="1">Bifunctional purine biosynthesis protein PurH</fullName>
    </recommendedName>
    <domain>
        <recommendedName>
            <fullName evidence="1">Phosphoribosylaminoimidazolecarboxamide formyltransferase</fullName>
            <ecNumber evidence="1">2.1.2.3</ecNumber>
        </recommendedName>
        <alternativeName>
            <fullName evidence="1">AICAR transformylase</fullName>
        </alternativeName>
    </domain>
    <domain>
        <recommendedName>
            <fullName evidence="1">IMP cyclohydrolase</fullName>
            <ecNumber evidence="1">3.5.4.10</ecNumber>
        </recommendedName>
        <alternativeName>
            <fullName evidence="1">ATIC</fullName>
        </alternativeName>
        <alternativeName>
            <fullName evidence="1">IMP synthase</fullName>
        </alternativeName>
        <alternativeName>
            <fullName evidence="1">Inosinicase</fullName>
        </alternativeName>
    </domain>
</protein>